<feature type="chain" id="PRO_1000078711" description="Small ribosomal subunit protein bS18">
    <location>
        <begin position="1"/>
        <end position="75"/>
    </location>
</feature>
<accession>A9N520</accession>
<organism>
    <name type="scientific">Salmonella paratyphi B (strain ATCC BAA-1250 / SPB7)</name>
    <dbReference type="NCBI Taxonomy" id="1016998"/>
    <lineage>
        <taxon>Bacteria</taxon>
        <taxon>Pseudomonadati</taxon>
        <taxon>Pseudomonadota</taxon>
        <taxon>Gammaproteobacteria</taxon>
        <taxon>Enterobacterales</taxon>
        <taxon>Enterobacteriaceae</taxon>
        <taxon>Salmonella</taxon>
    </lineage>
</organism>
<evidence type="ECO:0000255" key="1">
    <source>
        <dbReference type="HAMAP-Rule" id="MF_00270"/>
    </source>
</evidence>
<evidence type="ECO:0000305" key="2"/>
<sequence length="75" mass="8986">MARYFRRRKFCRFTAEGVQEIDYKDIATLKNYITESGKIVPSRITGTRAKYQRQLARAIKRARYLSLLPYTDRHQ</sequence>
<dbReference type="EMBL" id="CP000886">
    <property type="protein sequence ID" value="ABX70797.1"/>
    <property type="molecule type" value="Genomic_DNA"/>
</dbReference>
<dbReference type="RefSeq" id="WP_000135199.1">
    <property type="nucleotide sequence ID" value="NC_010102.1"/>
</dbReference>
<dbReference type="SMR" id="A9N520"/>
<dbReference type="GeneID" id="98186237"/>
<dbReference type="KEGG" id="spq:SPAB_05528"/>
<dbReference type="PATRIC" id="fig|1016998.12.peg.5181"/>
<dbReference type="HOGENOM" id="CLU_148710_2_3_6"/>
<dbReference type="BioCyc" id="SENT1016998:SPAB_RS22575-MONOMER"/>
<dbReference type="Proteomes" id="UP000008556">
    <property type="component" value="Chromosome"/>
</dbReference>
<dbReference type="GO" id="GO:0022627">
    <property type="term" value="C:cytosolic small ribosomal subunit"/>
    <property type="evidence" value="ECO:0007669"/>
    <property type="project" value="TreeGrafter"/>
</dbReference>
<dbReference type="GO" id="GO:0070181">
    <property type="term" value="F:small ribosomal subunit rRNA binding"/>
    <property type="evidence" value="ECO:0007669"/>
    <property type="project" value="TreeGrafter"/>
</dbReference>
<dbReference type="GO" id="GO:0003735">
    <property type="term" value="F:structural constituent of ribosome"/>
    <property type="evidence" value="ECO:0007669"/>
    <property type="project" value="InterPro"/>
</dbReference>
<dbReference type="GO" id="GO:0006412">
    <property type="term" value="P:translation"/>
    <property type="evidence" value="ECO:0007669"/>
    <property type="project" value="UniProtKB-UniRule"/>
</dbReference>
<dbReference type="FunFam" id="4.10.640.10:FF:000001">
    <property type="entry name" value="30S ribosomal protein S18"/>
    <property type="match status" value="1"/>
</dbReference>
<dbReference type="Gene3D" id="4.10.640.10">
    <property type="entry name" value="Ribosomal protein S18"/>
    <property type="match status" value="1"/>
</dbReference>
<dbReference type="HAMAP" id="MF_00270">
    <property type="entry name" value="Ribosomal_bS18"/>
    <property type="match status" value="1"/>
</dbReference>
<dbReference type="InterPro" id="IPR001648">
    <property type="entry name" value="Ribosomal_bS18"/>
</dbReference>
<dbReference type="InterPro" id="IPR018275">
    <property type="entry name" value="Ribosomal_bS18_CS"/>
</dbReference>
<dbReference type="InterPro" id="IPR036870">
    <property type="entry name" value="Ribosomal_bS18_sf"/>
</dbReference>
<dbReference type="NCBIfam" id="TIGR00165">
    <property type="entry name" value="S18"/>
    <property type="match status" value="1"/>
</dbReference>
<dbReference type="PANTHER" id="PTHR13479">
    <property type="entry name" value="30S RIBOSOMAL PROTEIN S18"/>
    <property type="match status" value="1"/>
</dbReference>
<dbReference type="PANTHER" id="PTHR13479:SF40">
    <property type="entry name" value="SMALL RIBOSOMAL SUBUNIT PROTEIN BS18M"/>
    <property type="match status" value="1"/>
</dbReference>
<dbReference type="Pfam" id="PF01084">
    <property type="entry name" value="Ribosomal_S18"/>
    <property type="match status" value="1"/>
</dbReference>
<dbReference type="PRINTS" id="PR00974">
    <property type="entry name" value="RIBOSOMALS18"/>
</dbReference>
<dbReference type="SUPFAM" id="SSF46911">
    <property type="entry name" value="Ribosomal protein S18"/>
    <property type="match status" value="1"/>
</dbReference>
<dbReference type="PROSITE" id="PS00057">
    <property type="entry name" value="RIBOSOMAL_S18"/>
    <property type="match status" value="1"/>
</dbReference>
<reference key="1">
    <citation type="submission" date="2007-11" db="EMBL/GenBank/DDBJ databases">
        <authorList>
            <consortium name="The Salmonella enterica serovar Paratyphi B Genome Sequencing Project"/>
            <person name="McClelland M."/>
            <person name="Sanderson E.K."/>
            <person name="Porwollik S."/>
            <person name="Spieth J."/>
            <person name="Clifton W.S."/>
            <person name="Fulton R."/>
            <person name="Cordes M."/>
            <person name="Wollam A."/>
            <person name="Shah N."/>
            <person name="Pepin K."/>
            <person name="Bhonagiri V."/>
            <person name="Nash W."/>
            <person name="Johnson M."/>
            <person name="Thiruvilangam P."/>
            <person name="Wilson R."/>
        </authorList>
    </citation>
    <scope>NUCLEOTIDE SEQUENCE [LARGE SCALE GENOMIC DNA]</scope>
    <source>
        <strain>ATCC BAA-1250 / SPB7</strain>
    </source>
</reference>
<gene>
    <name evidence="1" type="primary">rpsR</name>
    <name type="ordered locus">SPAB_05528</name>
</gene>
<comment type="function">
    <text evidence="1">Binds as a heterodimer with protein bS6 to the central domain of the 16S rRNA, where it helps stabilize the platform of the 30S subunit.</text>
</comment>
<comment type="subunit">
    <text evidence="1">Part of the 30S ribosomal subunit. Forms a tight heterodimer with protein bS6.</text>
</comment>
<comment type="similarity">
    <text evidence="1">Belongs to the bacterial ribosomal protein bS18 family.</text>
</comment>
<protein>
    <recommendedName>
        <fullName evidence="1">Small ribosomal subunit protein bS18</fullName>
    </recommendedName>
    <alternativeName>
        <fullName evidence="2">30S ribosomal protein S18</fullName>
    </alternativeName>
</protein>
<proteinExistence type="inferred from homology"/>
<keyword id="KW-0687">Ribonucleoprotein</keyword>
<keyword id="KW-0689">Ribosomal protein</keyword>
<keyword id="KW-0694">RNA-binding</keyword>
<keyword id="KW-0699">rRNA-binding</keyword>
<name>RS18_SALPB</name>